<protein>
    <recommendedName>
        <fullName>C-C chemokine receptor type 5</fullName>
        <shortName>C-C CKR-5</shortName>
        <shortName>CC-CKR-5</shortName>
        <shortName>CCR-5</shortName>
        <shortName>CCR5</shortName>
    </recommendedName>
    <cdAntigenName>CD195</cdAntigenName>
</protein>
<reference key="1">
    <citation type="journal article" date="1999" name="Mol. Biol. Evol.">
        <title>Sequence evolution of the CCR5 chemokine receptor gene in primates.</title>
        <authorList>
            <person name="Zhang Y.-W."/>
            <person name="Ryder O.A."/>
            <person name="Zhang Y.-P."/>
        </authorList>
    </citation>
    <scope>NUCLEOTIDE SEQUENCE [GENOMIC DNA]</scope>
</reference>
<comment type="function">
    <text evidence="1">Receptor for a number of inflammatory CC-chemokines including CCL3/MIP-1-alpha, CCL4/MIP-1-beta and RANTES and subsequently transduces a signal by increasing the intracellular calcium ion level. May play a role in the control of granulocytic lineage proliferation or differentiation. Participates in T-lymphocyte migration to the infection site by acting as a chemotactic receptor.</text>
</comment>
<comment type="subunit">
    <text evidence="1">Interacts with PRAF2. Efficient ligand binding to CCL3/MIP-1alpha and CCL4/MIP-1beta requires sulfation, O-glycosylation and sialic acid modifications. Glycosylation on Ser-6 is required for efficient binding of CCL4. Interacts with GRK2. Interacts with ARRB1 and ARRB2. Interacts with CNIH4. Interacts with S100A4; this interaction stimulates T-lymphocyte chemotaxis.</text>
</comment>
<comment type="subcellular location">
    <subcellularLocation>
        <location evidence="2">Cell membrane</location>
        <topology evidence="2">Multi-pass membrane protein</topology>
    </subcellularLocation>
</comment>
<comment type="PTM">
    <text evidence="1">Sulfated on at least 2 of the N-terminal tyrosines. Sulfation is required for efficient binding of the chemokines, CCL3 and CCL4 (By similarity).</text>
</comment>
<comment type="PTM">
    <text evidence="1">Palmitoylation in the C-terminal is important for cell surface expression.</text>
</comment>
<comment type="PTM">
    <text evidence="1">Phosphorylation on serine residues in the C-terminal is stimulated by binding CC chemokines especially by APO-RANTES.</text>
</comment>
<comment type="PTM">
    <text evidence="1">O-glycosylated, but not N-glycosylated. Ser-6 appears to be the major site even if Ser-7 may be also O-glycosylated. Also sialylated glycans present which contribute to chemokine binding. Thr-16 and Ser-17 may also be glycosylated and, if so, with small moieties such as a T-antigen.</text>
</comment>
<comment type="similarity">
    <text evidence="4">Belongs to the G-protein coupled receptor 1 family.</text>
</comment>
<accession>O97883</accession>
<sequence>MDYQVSSPTYDIDYDTSEPCQKINVKQIAARLLPPLYSLVFIFGFVGNMLVILVLINCKRLKSMTDIYLLNLAISDLFFLLTVPFWAHYAAAQWDFGNTMCQLLTGLYFIGFFSGIFFIILLTIDRYLAIVHAVFALKARTVTFGVVTSVITWVVAVFASLPGIIFTRSQKEGLHYTCSSHFPYSQYQFWKNFQTLKIVILGLVLPLLVMVICYSGILKTLLRCRNEKKRHRAVRLIFTIMIVYFLFWAPYNIVLLLNTFQEFFGLNNCSSSNRLDQAMQVTETLGMTHCCINPIIYAFVGEKFRNYLLVFFQKHIAKHFCKCCSIFQQEAPERASSVYTRSTGEQEISVGL</sequence>
<organism>
    <name type="scientific">Nomascus leucogenys</name>
    <name type="common">Northern white-cheeked gibbon</name>
    <name type="synonym">Hylobates leucogenys</name>
    <dbReference type="NCBI Taxonomy" id="61853"/>
    <lineage>
        <taxon>Eukaryota</taxon>
        <taxon>Metazoa</taxon>
        <taxon>Chordata</taxon>
        <taxon>Craniata</taxon>
        <taxon>Vertebrata</taxon>
        <taxon>Euteleostomi</taxon>
        <taxon>Mammalia</taxon>
        <taxon>Eutheria</taxon>
        <taxon>Euarchontoglires</taxon>
        <taxon>Primates</taxon>
        <taxon>Haplorrhini</taxon>
        <taxon>Catarrhini</taxon>
        <taxon>Hylobatidae</taxon>
        <taxon>Nomascus</taxon>
    </lineage>
</organism>
<evidence type="ECO:0000250" key="1">
    <source>
        <dbReference type="UniProtKB" id="P51681"/>
    </source>
</evidence>
<evidence type="ECO:0000250" key="2">
    <source>
        <dbReference type="UniProtKB" id="Q9XT76"/>
    </source>
</evidence>
<evidence type="ECO:0000255" key="3"/>
<evidence type="ECO:0000255" key="4">
    <source>
        <dbReference type="PROSITE-ProRule" id="PRU00521"/>
    </source>
</evidence>
<proteinExistence type="inferred from homology"/>
<keyword id="KW-1003">Cell membrane</keyword>
<keyword id="KW-1015">Disulfide bond</keyword>
<keyword id="KW-0297">G-protein coupled receptor</keyword>
<keyword id="KW-0325">Glycoprotein</keyword>
<keyword id="KW-0449">Lipoprotein</keyword>
<keyword id="KW-0472">Membrane</keyword>
<keyword id="KW-0564">Palmitate</keyword>
<keyword id="KW-0597">Phosphoprotein</keyword>
<keyword id="KW-0675">Receptor</keyword>
<keyword id="KW-1185">Reference proteome</keyword>
<keyword id="KW-0765">Sulfation</keyword>
<keyword id="KW-0807">Transducer</keyword>
<keyword id="KW-0812">Transmembrane</keyword>
<keyword id="KW-1133">Transmembrane helix</keyword>
<feature type="chain" id="PRO_0000069258" description="C-C chemokine receptor type 5">
    <location>
        <begin position="1"/>
        <end position="352"/>
    </location>
</feature>
<feature type="topological domain" description="Extracellular" evidence="3">
    <location>
        <begin position="1"/>
        <end position="30"/>
    </location>
</feature>
<feature type="transmembrane region" description="Helical; Name=1" evidence="3">
    <location>
        <begin position="31"/>
        <end position="58"/>
    </location>
</feature>
<feature type="topological domain" description="Cytoplasmic" evidence="3">
    <location>
        <begin position="59"/>
        <end position="68"/>
    </location>
</feature>
<feature type="transmembrane region" description="Helical; Name=2" evidence="3">
    <location>
        <begin position="69"/>
        <end position="89"/>
    </location>
</feature>
<feature type="topological domain" description="Extracellular" evidence="3">
    <location>
        <begin position="90"/>
        <end position="102"/>
    </location>
</feature>
<feature type="transmembrane region" description="Helical; Name=3" evidence="3">
    <location>
        <begin position="103"/>
        <end position="124"/>
    </location>
</feature>
<feature type="topological domain" description="Cytoplasmic" evidence="3">
    <location>
        <begin position="125"/>
        <end position="141"/>
    </location>
</feature>
<feature type="transmembrane region" description="Helical; Name=4" evidence="3">
    <location>
        <begin position="142"/>
        <end position="166"/>
    </location>
</feature>
<feature type="topological domain" description="Extracellular" evidence="3">
    <location>
        <begin position="167"/>
        <end position="198"/>
    </location>
</feature>
<feature type="transmembrane region" description="Helical; Name=5" evidence="3">
    <location>
        <begin position="199"/>
        <end position="218"/>
    </location>
</feature>
<feature type="topological domain" description="Cytoplasmic" evidence="3">
    <location>
        <begin position="219"/>
        <end position="235"/>
    </location>
</feature>
<feature type="transmembrane region" description="Helical; Name=6" evidence="3">
    <location>
        <begin position="236"/>
        <end position="260"/>
    </location>
</feature>
<feature type="topological domain" description="Extracellular" evidence="3">
    <location>
        <begin position="261"/>
        <end position="277"/>
    </location>
</feature>
<feature type="transmembrane region" description="Helical; Name=7" evidence="3">
    <location>
        <begin position="278"/>
        <end position="301"/>
    </location>
</feature>
<feature type="topological domain" description="Cytoplasmic" evidence="3">
    <location>
        <begin position="302"/>
        <end position="352"/>
    </location>
</feature>
<feature type="modified residue" description="Sulfotyrosine" evidence="1">
    <location>
        <position position="3"/>
    </location>
</feature>
<feature type="modified residue" description="Sulfotyrosine" evidence="3">
    <location>
        <position position="10"/>
    </location>
</feature>
<feature type="modified residue" description="Sulfotyrosine" evidence="3">
    <location>
        <position position="14"/>
    </location>
</feature>
<feature type="modified residue" description="Phosphoserine; by BARK1" evidence="1">
    <location>
        <position position="336"/>
    </location>
</feature>
<feature type="modified residue" description="Phosphoserine; by BARK1" evidence="1">
    <location>
        <position position="337"/>
    </location>
</feature>
<feature type="modified residue" description="Phosphoserine; by BARK1" evidence="1">
    <location>
        <position position="342"/>
    </location>
</feature>
<feature type="modified residue" description="Phosphoserine; by BARK1" evidence="1">
    <location>
        <position position="349"/>
    </location>
</feature>
<feature type="lipid moiety-binding region" description="S-palmitoyl cysteine" evidence="1">
    <location>
        <position position="321"/>
    </location>
</feature>
<feature type="lipid moiety-binding region" description="S-palmitoyl cysteine" evidence="1">
    <location>
        <position position="323"/>
    </location>
</feature>
<feature type="lipid moiety-binding region" description="S-palmitoyl cysteine" evidence="1">
    <location>
        <position position="324"/>
    </location>
</feature>
<feature type="glycosylation site" description="O-linked (GalNAc...) serine" evidence="1">
    <location>
        <position position="6"/>
    </location>
</feature>
<feature type="glycosylation site" description="O-linked (GalNAc...) serine" evidence="1">
    <location>
        <position position="7"/>
    </location>
</feature>
<feature type="disulfide bond" evidence="1">
    <location>
        <begin position="20"/>
        <end position="269"/>
    </location>
</feature>
<feature type="disulfide bond" evidence="4">
    <location>
        <begin position="101"/>
        <end position="178"/>
    </location>
</feature>
<gene>
    <name type="primary">CCR5</name>
    <name type="synonym">CMKBR5</name>
</gene>
<dbReference type="EMBL" id="AF075451">
    <property type="protein sequence ID" value="AAD19863.1"/>
    <property type="molecule type" value="Genomic_DNA"/>
</dbReference>
<dbReference type="RefSeq" id="XP_030666043.1">
    <property type="nucleotide sequence ID" value="XM_030810183.1"/>
</dbReference>
<dbReference type="BMRB" id="O97883"/>
<dbReference type="SMR" id="O97883"/>
<dbReference type="FunCoup" id="O97883">
    <property type="interactions" value="938"/>
</dbReference>
<dbReference type="STRING" id="61853.ENSNLEP00000016023"/>
<dbReference type="GlyCosmos" id="O97883">
    <property type="glycosylation" value="2 sites, No reported glycans"/>
</dbReference>
<dbReference type="GeneID" id="115834714"/>
<dbReference type="InParanoid" id="O97883"/>
<dbReference type="OrthoDB" id="9876908at2759"/>
<dbReference type="Proteomes" id="UP000001073">
    <property type="component" value="Unplaced"/>
</dbReference>
<dbReference type="GO" id="GO:0005737">
    <property type="term" value="C:cytoplasm"/>
    <property type="evidence" value="ECO:0007669"/>
    <property type="project" value="TreeGrafter"/>
</dbReference>
<dbReference type="GO" id="GO:0009897">
    <property type="term" value="C:external side of plasma membrane"/>
    <property type="evidence" value="ECO:0000250"/>
    <property type="project" value="UniProtKB"/>
</dbReference>
<dbReference type="GO" id="GO:0016493">
    <property type="term" value="F:C-C chemokine receptor activity"/>
    <property type="evidence" value="ECO:0000250"/>
    <property type="project" value="UniProtKB"/>
</dbReference>
<dbReference type="GO" id="GO:0071791">
    <property type="term" value="F:chemokine (C-C motif) ligand 5 binding"/>
    <property type="evidence" value="ECO:0007669"/>
    <property type="project" value="TreeGrafter"/>
</dbReference>
<dbReference type="GO" id="GO:0019722">
    <property type="term" value="P:calcium-mediated signaling"/>
    <property type="evidence" value="ECO:0007669"/>
    <property type="project" value="TreeGrafter"/>
</dbReference>
<dbReference type="GO" id="GO:0060326">
    <property type="term" value="P:cell chemotaxis"/>
    <property type="evidence" value="ECO:0007669"/>
    <property type="project" value="TreeGrafter"/>
</dbReference>
<dbReference type="GO" id="GO:0006955">
    <property type="term" value="P:immune response"/>
    <property type="evidence" value="ECO:0007669"/>
    <property type="project" value="InterPro"/>
</dbReference>
<dbReference type="GO" id="GO:0006954">
    <property type="term" value="P:inflammatory response"/>
    <property type="evidence" value="ECO:0007669"/>
    <property type="project" value="InterPro"/>
</dbReference>
<dbReference type="GO" id="GO:0007204">
    <property type="term" value="P:positive regulation of cytosolic calcium ion concentration"/>
    <property type="evidence" value="ECO:0007669"/>
    <property type="project" value="TreeGrafter"/>
</dbReference>
<dbReference type="CDD" id="cd15184">
    <property type="entry name" value="7tmA_CCR5_CCR2"/>
    <property type="match status" value="1"/>
</dbReference>
<dbReference type="FunFam" id="1.20.1070.10:FF:000026">
    <property type="entry name" value="C-C chemokine receptor type 5"/>
    <property type="match status" value="1"/>
</dbReference>
<dbReference type="Gene3D" id="1.20.1070.10">
    <property type="entry name" value="Rhodopsin 7-helix transmembrane proteins"/>
    <property type="match status" value="1"/>
</dbReference>
<dbReference type="InterPro" id="IPR050119">
    <property type="entry name" value="CCR1-9-like"/>
</dbReference>
<dbReference type="InterPro" id="IPR002240">
    <property type="entry name" value="Chemokine_CCR5"/>
</dbReference>
<dbReference type="InterPro" id="IPR000355">
    <property type="entry name" value="Chemokine_rcpt"/>
</dbReference>
<dbReference type="InterPro" id="IPR000276">
    <property type="entry name" value="GPCR_Rhodpsn"/>
</dbReference>
<dbReference type="InterPro" id="IPR017452">
    <property type="entry name" value="GPCR_Rhodpsn_7TM"/>
</dbReference>
<dbReference type="PANTHER" id="PTHR10489:SF686">
    <property type="entry name" value="C-C CHEMOKINE RECEPTOR TYPE 5"/>
    <property type="match status" value="1"/>
</dbReference>
<dbReference type="PANTHER" id="PTHR10489">
    <property type="entry name" value="CELL ADHESION MOLECULE"/>
    <property type="match status" value="1"/>
</dbReference>
<dbReference type="Pfam" id="PF00001">
    <property type="entry name" value="7tm_1"/>
    <property type="match status" value="1"/>
</dbReference>
<dbReference type="PRINTS" id="PR00657">
    <property type="entry name" value="CCCHEMOKINER"/>
</dbReference>
<dbReference type="PRINTS" id="PR01110">
    <property type="entry name" value="CHEMOKINER5"/>
</dbReference>
<dbReference type="PRINTS" id="PR00237">
    <property type="entry name" value="GPCRRHODOPSN"/>
</dbReference>
<dbReference type="SUPFAM" id="SSF81321">
    <property type="entry name" value="Family A G protein-coupled receptor-like"/>
    <property type="match status" value="1"/>
</dbReference>
<dbReference type="PROSITE" id="PS00237">
    <property type="entry name" value="G_PROTEIN_RECEP_F1_1"/>
    <property type="match status" value="1"/>
</dbReference>
<dbReference type="PROSITE" id="PS50262">
    <property type="entry name" value="G_PROTEIN_RECEP_F1_2"/>
    <property type="match status" value="1"/>
</dbReference>
<name>CCR5_NOMLE</name>